<reference key="1">
    <citation type="submission" date="2004-11" db="EMBL/GenBank/DDBJ databases">
        <authorList>
            <consortium name="The German cDNA consortium"/>
        </authorList>
    </citation>
    <scope>NUCLEOTIDE SEQUENCE [LARGE SCALE MRNA]</scope>
    <source>
        <tissue>Brain cortex</tissue>
    </source>
</reference>
<dbReference type="EMBL" id="CR859486">
    <property type="protein sequence ID" value="CAH91656.1"/>
    <property type="molecule type" value="mRNA"/>
</dbReference>
<dbReference type="RefSeq" id="NP_001125972.1">
    <property type="nucleotide sequence ID" value="NM_001132500.1"/>
</dbReference>
<dbReference type="SMR" id="Q5R9A4"/>
<dbReference type="FunCoup" id="Q5R9A4">
    <property type="interactions" value="909"/>
</dbReference>
<dbReference type="STRING" id="9601.ENSPPYP00000020080"/>
<dbReference type="GeneID" id="100172910"/>
<dbReference type="KEGG" id="pon:100172910"/>
<dbReference type="CTD" id="4189"/>
<dbReference type="eggNOG" id="KOG0714">
    <property type="taxonomic scope" value="Eukaryota"/>
</dbReference>
<dbReference type="InParanoid" id="Q5R9A4"/>
<dbReference type="OrthoDB" id="376357at2759"/>
<dbReference type="Proteomes" id="UP000001595">
    <property type="component" value="Unplaced"/>
</dbReference>
<dbReference type="GO" id="GO:0005783">
    <property type="term" value="C:endoplasmic reticulum"/>
    <property type="evidence" value="ECO:0000250"/>
    <property type="project" value="UniProtKB"/>
</dbReference>
<dbReference type="GO" id="GO:0005788">
    <property type="term" value="C:endoplasmic reticulum lumen"/>
    <property type="evidence" value="ECO:0000250"/>
    <property type="project" value="UniProtKB"/>
</dbReference>
<dbReference type="GO" id="GO:0051787">
    <property type="term" value="F:misfolded protein binding"/>
    <property type="evidence" value="ECO:0007669"/>
    <property type="project" value="TreeGrafter"/>
</dbReference>
<dbReference type="GO" id="GO:0051087">
    <property type="term" value="F:protein-folding chaperone binding"/>
    <property type="evidence" value="ECO:0000250"/>
    <property type="project" value="UniProtKB"/>
</dbReference>
<dbReference type="GO" id="GO:0030183">
    <property type="term" value="P:B cell differentiation"/>
    <property type="evidence" value="ECO:0000250"/>
    <property type="project" value="UniProtKB"/>
</dbReference>
<dbReference type="GO" id="GO:0036503">
    <property type="term" value="P:ERAD pathway"/>
    <property type="evidence" value="ECO:0000250"/>
    <property type="project" value="UniProtKB"/>
</dbReference>
<dbReference type="GO" id="GO:1903895">
    <property type="term" value="P:negative regulation of IRE1-mediated unfolded protein response"/>
    <property type="evidence" value="ECO:0000250"/>
    <property type="project" value="UniProtKB"/>
</dbReference>
<dbReference type="GO" id="GO:0002639">
    <property type="term" value="P:positive regulation of immunoglobulin production"/>
    <property type="evidence" value="ECO:0000250"/>
    <property type="project" value="UniProtKB"/>
</dbReference>
<dbReference type="GO" id="GO:0034976">
    <property type="term" value="P:response to endoplasmic reticulum stress"/>
    <property type="evidence" value="ECO:0000250"/>
    <property type="project" value="UniProtKB"/>
</dbReference>
<dbReference type="GO" id="GO:0006986">
    <property type="term" value="P:response to unfolded protein"/>
    <property type="evidence" value="ECO:0007669"/>
    <property type="project" value="UniProtKB-KW"/>
</dbReference>
<dbReference type="CDD" id="cd06257">
    <property type="entry name" value="DnaJ"/>
    <property type="match status" value="1"/>
</dbReference>
<dbReference type="FunFam" id="1.10.287.110:FF:000054">
    <property type="entry name" value="dnaJ homolog subfamily B member 9"/>
    <property type="match status" value="1"/>
</dbReference>
<dbReference type="Gene3D" id="1.10.287.110">
    <property type="entry name" value="DnaJ domain"/>
    <property type="match status" value="1"/>
</dbReference>
<dbReference type="InterPro" id="IPR001623">
    <property type="entry name" value="DnaJ_domain"/>
</dbReference>
<dbReference type="InterPro" id="IPR018253">
    <property type="entry name" value="DnaJ_domain_CS"/>
</dbReference>
<dbReference type="InterPro" id="IPR051948">
    <property type="entry name" value="Hsp70_co-chaperone_J-domain"/>
</dbReference>
<dbReference type="InterPro" id="IPR036869">
    <property type="entry name" value="J_dom_sf"/>
</dbReference>
<dbReference type="PANTHER" id="PTHR44360">
    <property type="entry name" value="DNAJ HOMOLOG SUBFAMILY B MEMBER 9"/>
    <property type="match status" value="1"/>
</dbReference>
<dbReference type="PANTHER" id="PTHR44360:SF1">
    <property type="entry name" value="DNAJ HOMOLOG SUBFAMILY B MEMBER 9"/>
    <property type="match status" value="1"/>
</dbReference>
<dbReference type="Pfam" id="PF00226">
    <property type="entry name" value="DnaJ"/>
    <property type="match status" value="1"/>
</dbReference>
<dbReference type="PRINTS" id="PR00625">
    <property type="entry name" value="JDOMAIN"/>
</dbReference>
<dbReference type="SMART" id="SM00271">
    <property type="entry name" value="DnaJ"/>
    <property type="match status" value="1"/>
</dbReference>
<dbReference type="SUPFAM" id="SSF46565">
    <property type="entry name" value="Chaperone J-domain"/>
    <property type="match status" value="1"/>
</dbReference>
<dbReference type="PROSITE" id="PS00636">
    <property type="entry name" value="DNAJ_1"/>
    <property type="match status" value="1"/>
</dbReference>
<dbReference type="PROSITE" id="PS50076">
    <property type="entry name" value="DNAJ_2"/>
    <property type="match status" value="1"/>
</dbReference>
<sequence length="223" mass="25605">MATPQSIFIFAICILMITELILASKSYYDILGVPKSASERQIKKAFHKLAMKYHPDKNKSPDAEAKFREIAEAYETLSDANRRKEYDTLGHSAFTNGKGQRGSGSSFEQSFNFNFDDLFKDFGFFGQNQNTRSKKHFENHFQTRPDGGSSRQRHHFQEFSFGGGLFDDMFEDMEKMFSFSGFDPTSRHTVQTENRFHGSSKHCRTVTQRRGNMVTTYTDCSGQ</sequence>
<organism>
    <name type="scientific">Pongo abelii</name>
    <name type="common">Sumatran orangutan</name>
    <name type="synonym">Pongo pygmaeus abelii</name>
    <dbReference type="NCBI Taxonomy" id="9601"/>
    <lineage>
        <taxon>Eukaryota</taxon>
        <taxon>Metazoa</taxon>
        <taxon>Chordata</taxon>
        <taxon>Craniata</taxon>
        <taxon>Vertebrata</taxon>
        <taxon>Euteleostomi</taxon>
        <taxon>Mammalia</taxon>
        <taxon>Eutheria</taxon>
        <taxon>Euarchontoglires</taxon>
        <taxon>Primates</taxon>
        <taxon>Haplorrhini</taxon>
        <taxon>Catarrhini</taxon>
        <taxon>Hominidae</taxon>
        <taxon>Pongo</taxon>
    </lineage>
</organism>
<proteinExistence type="evidence at transcript level"/>
<name>DNJB9_PONAB</name>
<evidence type="ECO:0000250" key="1">
    <source>
        <dbReference type="UniProtKB" id="G3H0N9"/>
    </source>
</evidence>
<evidence type="ECO:0000250" key="2">
    <source>
        <dbReference type="UniProtKB" id="Q9QYI6"/>
    </source>
</evidence>
<evidence type="ECO:0000250" key="3">
    <source>
        <dbReference type="UniProtKB" id="Q9UBS3"/>
    </source>
</evidence>
<evidence type="ECO:0000255" key="4"/>
<evidence type="ECO:0000255" key="5">
    <source>
        <dbReference type="PROSITE-ProRule" id="PRU00286"/>
    </source>
</evidence>
<evidence type="ECO:0000305" key="6"/>
<feature type="signal peptide" evidence="4">
    <location>
        <begin position="1"/>
        <end position="23"/>
    </location>
</feature>
<feature type="chain" id="PRO_0000071033" description="DnaJ homolog subfamily B member 9">
    <location>
        <begin position="24"/>
        <end position="223"/>
    </location>
</feature>
<feature type="domain" description="J" evidence="5">
    <location>
        <begin position="26"/>
        <end position="90"/>
    </location>
</feature>
<feature type="region of interest" description="Divergent targeting domain" evidence="2">
    <location>
        <begin position="91"/>
        <end position="223"/>
    </location>
</feature>
<feature type="modified residue" description="Phosphoserine" evidence="3">
    <location>
        <position position="133"/>
    </location>
</feature>
<keyword id="KW-0143">Chaperone</keyword>
<keyword id="KW-0256">Endoplasmic reticulum</keyword>
<keyword id="KW-0597">Phosphoprotein</keyword>
<keyword id="KW-1185">Reference proteome</keyword>
<keyword id="KW-0732">Signal</keyword>
<keyword id="KW-0834">Unfolded protein response</keyword>
<accession>Q5R9A4</accession>
<gene>
    <name evidence="2" type="primary">DNAJB9</name>
</gene>
<comment type="function">
    <text evidence="1 2">Co-chaperone for Hsp70 protein HSPA5/BiP that acts as a key repressor of the ERN1/IRE1-mediated unfolded protein response (UPR) (By similarity). J domain-containing co-chaperones stimulate the ATPase activity of Hsp70 proteins and are required for efficient substrate recognition by Hsp70 proteins (By similarity). In the unstressed endoplasmic reticulum, interacts with the luminal region of ERN1/IRE1 and selectively recruits HSPA5/BiP: HSPA5/BiP disrupts the dimerization of the active ERN1/IRE1 luminal region, thereby inactivating ERN1/IRE1 (By similarity). Also involved in endoplasmic reticulum-associated degradation (ERAD) of misfolded proteins. Required for survival of B-cell progenitors and normal antibody production (By similarity).</text>
</comment>
<comment type="subunit">
    <text evidence="1 2">Interacts with HSPA5/BiP; interaction is direct (By similarity). Interacts with ERN1/IRE1 (via the luminal region) (By similarity). Interacts with DERL1 (By similarity).</text>
</comment>
<comment type="subcellular location">
    <subcellularLocation>
        <location evidence="2">Endoplasmic reticulum lumen</location>
    </subcellularLocation>
</comment>
<comment type="domain">
    <text evidence="2">The J domain stimulates the ATPase activity of HSPA5/BiP, while the divergent targeting domain is required for efficient substrate recognition by HSPA5/BiP. The divergent targeting domain specifically recognizes and binds to aggregation-prone sequences.</text>
</comment>
<protein>
    <recommendedName>
        <fullName evidence="6">DnaJ homolog subfamily B member 9</fullName>
    </recommendedName>
    <alternativeName>
        <fullName evidence="2">Endoplasmic reticulum DNA J domain-containing protein 4</fullName>
        <shortName evidence="2">ER-resident protein ERdj4</shortName>
        <shortName evidence="2">ERdj4</shortName>
    </alternativeName>
</protein>